<reference evidence="6" key="1">
    <citation type="journal article" date="2005" name="J. Cell Sci.">
        <title>Functional contribution of Pds5 to cohesin-mediated cohesion in human cells and Xenopus egg extracts.</title>
        <authorList>
            <person name="Losada A."/>
            <person name="Yokochi T."/>
            <person name="Hirano T."/>
        </authorList>
    </citation>
    <scope>NUCLEOTIDE SEQUENCE [MRNA]</scope>
    <scope>FUNCTION</scope>
    <scope>INTERACTION WITH CHROMATIN AND THE COHESIN COMPLEX</scope>
</reference>
<feature type="chain" id="PRO_0000299066" description="Sister chromatid cohesion protein PDS5 homolog A-A">
    <location>
        <begin position="1"/>
        <end position="1323"/>
    </location>
</feature>
<feature type="repeat" description="HEAT" evidence="2">
    <location>
        <begin position="385"/>
        <end position="421"/>
    </location>
</feature>
<feature type="region of interest" description="Disordered" evidence="3">
    <location>
        <begin position="1139"/>
        <end position="1323"/>
    </location>
</feature>
<feature type="compositionally biased region" description="Low complexity" evidence="3">
    <location>
        <begin position="1153"/>
        <end position="1165"/>
    </location>
</feature>
<feature type="compositionally biased region" description="Polar residues" evidence="3">
    <location>
        <begin position="1166"/>
        <end position="1176"/>
    </location>
</feature>
<feature type="compositionally biased region" description="Polar residues" evidence="3">
    <location>
        <begin position="1210"/>
        <end position="1220"/>
    </location>
</feature>
<feature type="compositionally biased region" description="Basic and acidic residues" evidence="3">
    <location>
        <begin position="1235"/>
        <end position="1246"/>
    </location>
</feature>
<organism>
    <name type="scientific">Xenopus laevis</name>
    <name type="common">African clawed frog</name>
    <dbReference type="NCBI Taxonomy" id="8355"/>
    <lineage>
        <taxon>Eukaryota</taxon>
        <taxon>Metazoa</taxon>
        <taxon>Chordata</taxon>
        <taxon>Craniata</taxon>
        <taxon>Vertebrata</taxon>
        <taxon>Euteleostomi</taxon>
        <taxon>Amphibia</taxon>
        <taxon>Batrachia</taxon>
        <taxon>Anura</taxon>
        <taxon>Pipoidea</taxon>
        <taxon>Pipidae</taxon>
        <taxon>Xenopodinae</taxon>
        <taxon>Xenopus</taxon>
        <taxon>Xenopus</taxon>
    </lineage>
</organism>
<dbReference type="EMBL" id="AY695731">
    <property type="protein sequence ID" value="AAV84283.1"/>
    <property type="molecule type" value="mRNA"/>
</dbReference>
<dbReference type="SMR" id="Q4QXM3"/>
<dbReference type="IntAct" id="Q4QXM3">
    <property type="interactions" value="5"/>
</dbReference>
<dbReference type="AGR" id="Xenbase:XB-GENE-5812802"/>
<dbReference type="Xenbase" id="XB-GENE-5812802">
    <property type="gene designation" value="pds5a.S"/>
</dbReference>
<dbReference type="Proteomes" id="UP000186698">
    <property type="component" value="Unplaced"/>
</dbReference>
<dbReference type="GO" id="GO:0000785">
    <property type="term" value="C:chromatin"/>
    <property type="evidence" value="ECO:0000318"/>
    <property type="project" value="GO_Central"/>
</dbReference>
<dbReference type="GO" id="GO:0005634">
    <property type="term" value="C:nucleus"/>
    <property type="evidence" value="ECO:0000318"/>
    <property type="project" value="GO_Central"/>
</dbReference>
<dbReference type="GO" id="GO:0051301">
    <property type="term" value="P:cell division"/>
    <property type="evidence" value="ECO:0007669"/>
    <property type="project" value="UniProtKB-KW"/>
</dbReference>
<dbReference type="GO" id="GO:0006281">
    <property type="term" value="P:DNA repair"/>
    <property type="evidence" value="ECO:0000318"/>
    <property type="project" value="GO_Central"/>
</dbReference>
<dbReference type="GO" id="GO:0007064">
    <property type="term" value="P:mitotic sister chromatid cohesion"/>
    <property type="evidence" value="ECO:0000318"/>
    <property type="project" value="GO_Central"/>
</dbReference>
<dbReference type="GO" id="GO:0008156">
    <property type="term" value="P:negative regulation of DNA replication"/>
    <property type="evidence" value="ECO:0000250"/>
    <property type="project" value="UniProtKB"/>
</dbReference>
<dbReference type="CDD" id="cd19953">
    <property type="entry name" value="PDS5"/>
    <property type="match status" value="1"/>
</dbReference>
<dbReference type="FunFam" id="1.25.10.10:FF:001146">
    <property type="entry name" value="PDS5 cohesin associated factor B"/>
    <property type="match status" value="1"/>
</dbReference>
<dbReference type="FunFam" id="1.25.10.10:FF:000064">
    <property type="entry name" value="Sister chromatid cohesion protein PDS5 homolog A"/>
    <property type="match status" value="1"/>
</dbReference>
<dbReference type="Gene3D" id="1.25.10.10">
    <property type="entry name" value="Leucine-rich Repeat Variant"/>
    <property type="match status" value="2"/>
</dbReference>
<dbReference type="InterPro" id="IPR011989">
    <property type="entry name" value="ARM-like"/>
</dbReference>
<dbReference type="InterPro" id="IPR016024">
    <property type="entry name" value="ARM-type_fold"/>
</dbReference>
<dbReference type="InterPro" id="IPR039776">
    <property type="entry name" value="Pds5"/>
</dbReference>
<dbReference type="PANTHER" id="PTHR12663">
    <property type="entry name" value="ANDROGEN INDUCED INHIBITOR OF PROLIFERATION AS3 / PDS5-RELATED"/>
    <property type="match status" value="1"/>
</dbReference>
<dbReference type="PANTHER" id="PTHR12663:SF2">
    <property type="entry name" value="SISTER CHROMATID COHESION PROTEIN PDS5 HOMOLOG A"/>
    <property type="match status" value="1"/>
</dbReference>
<dbReference type="Pfam" id="PF20168">
    <property type="entry name" value="PDS5"/>
    <property type="match status" value="1"/>
</dbReference>
<dbReference type="SUPFAM" id="SSF48371">
    <property type="entry name" value="ARM repeat"/>
    <property type="match status" value="1"/>
</dbReference>
<protein>
    <recommendedName>
        <fullName>Sister chromatid cohesion protein PDS5 homolog A-A</fullName>
    </recommendedName>
</protein>
<keyword id="KW-0131">Cell cycle</keyword>
<keyword id="KW-0132">Cell division</keyword>
<keyword id="KW-0498">Mitosis</keyword>
<keyword id="KW-0539">Nucleus</keyword>
<keyword id="KW-1185">Reference proteome</keyword>
<keyword id="KW-0677">Repeat</keyword>
<sequence length="1323" mass="149473">MEFPTQPKLVDGKSIIYPPGVKEITDKISNDEVVKRLKMVVKTYMDMDQDSEEEKQQYLPLALHLSSEFFLRNPNKDVRLLVACCLADIFRIYAPEAPYTSHDKLKEIFLFITRQLKGLEDTKSPQFNRYFYLLENLAWVKSYNICFELEDCNEIFIQLFKTLFSVINNSHNQKVQMHMLDLMSSITMEGDGVTQEQLDSILINLISAHKNLNKQAFDLAKVLLKRTAQTIEPCIANFFNQVLVLGKSSVSDLSEHVFDLIQELFAIDPHLLLSVMPQLEFKLKSNDGEERLAVVRLLAKLFGSKDSDLATQNRPLWQCFLGRFNDIHVPVRLESVKFASHCLMNHPDLAKDLTEFLKVRSHDPEEAIRHDVIVTIITAAKKDLFLVNDQLLGFVRERTLDKRWRVRKEAMMGLAQLYKKYCLHGEGGKDAAEKVSWIKDKLLHIYYQNSIDDKLLVEKIFAQQLVPHNLETEERMKCLYYLYASLDPNAVKALNEMWKCQNMLRSHVRELLDLHKQPTSEANTTAMFAKLMTVAKNLPDPGKAQDFVKKFNQVLGEDEKLRSQLEVLISPSCSCKQADVCVRDIARKVANPKQPTNPFLEMVKFLLERIAPVHIDSEAISALVKLMNKSIEGTADDEEEGVSPDSAIRAGLELLKVLSFTHPTSFHSDETYESLLQCLRMEDDKVAEAAIQIFRNTGHRIETDLPQIRSALIPILHQKAKRGTPHQAKQAVHCIHSIFSNKEVQLAQIFEPLSRSLNADVPEQLVTPLVSLGHISMLAPDQFASPMKSVVANFIVKDLLMNDRSNGDKNGKLWCPDEEVSPEVLAKGQAIKLLVRWLLGMKNNQSKSANSTLRLLSAMLVSEGDLTEQKRISKSDMSRLRLAAGAAIMKLAQEPCYHEIITPEQFQLCALVINDECYQVRQIFAQKLHKALVKLQLPLEYMAIFALCAKDPVKERRAHARQCLLKNISIRREYIKQNPVSNEKLLSLLPEYVVPYMIHLLAHDPDFTKPQDIDQLRDIKECLWFMLEVLMTKNENNSHAFMKKLCENIKQTRDAQAPDDPKANEKLFTVCDVALCVVYNKSAPCHSESSKDPVLPLTFFTQPDKDFSSKSYITDEARNLLLTGKPKPMTVLGMVNKPLNATGRRPYSRSTGSEISNNVSINSESDASVANRQSSEVPEIGVSENDENPVRLISVPPAKTETVKNKEVNLDQTAPSNTGTERGKKRSAASAGAENIRKESEEKKADNISATPTPKPRRGRPPKSESQGSAAKNDETSKPSGRGRKRAAANQESSGAQEAANAKVPKQDSTAKKTAQRQIDLHR</sequence>
<name>PD5AA_XENLA</name>
<gene>
    <name type="primary">pds5a-a</name>
    <name evidence="5" type="synonym">pds5a</name>
</gene>
<evidence type="ECO:0000250" key="1">
    <source>
        <dbReference type="UniProtKB" id="Q29RF7"/>
    </source>
</evidence>
<evidence type="ECO:0000255" key="2"/>
<evidence type="ECO:0000256" key="3">
    <source>
        <dbReference type="SAM" id="MobiDB-lite"/>
    </source>
</evidence>
<evidence type="ECO:0000269" key="4">
    <source>
    </source>
</evidence>
<evidence type="ECO:0000303" key="5">
    <source>
    </source>
</evidence>
<evidence type="ECO:0000312" key="6">
    <source>
        <dbReference type="EMBL" id="AAV84283.1"/>
    </source>
</evidence>
<comment type="function">
    <text evidence="4">May regulate sister chromatid cohesion during mitosis and couple it to DNA replication.</text>
</comment>
<comment type="subunit">
    <text evidence="4">Interacts with the cohesin complex. Binds chromatin in a cohesin-dependent manner.</text>
</comment>
<comment type="interaction">
    <interactant intactId="EBI-1386928">
        <id>Q4QXM3</id>
    </interactant>
    <interactant intactId="EBI-80653">
        <id>O93309</id>
        <label>smc3</label>
    </interactant>
    <organismsDiffer>false</organismsDiffer>
    <experiments>2</experiments>
</comment>
<comment type="subcellular location">
    <subcellularLocation>
        <location evidence="1">Nucleus</location>
    </subcellularLocation>
</comment>
<comment type="miscellaneous">
    <text evidence="4">Chromosomes assembled in the absence of pds5a and aprin/pds5b proteins have a mild defect in centromere cohesion in vitro.</text>
</comment>
<proteinExistence type="evidence at protein level"/>
<accession>Q4QXM3</accession>